<comment type="function">
    <text evidence="1">Involved in the third step of the chorismate pathway, which leads to the biosynthesis of aromatic amino acids. Catalyzes the cis-dehydration of 3-dehydroquinate (DHQ) and introduces the first double bond of the aromatic ring to yield 3-dehydroshikimate.</text>
</comment>
<comment type="catalytic activity">
    <reaction evidence="1">
        <text>3-dehydroquinate = 3-dehydroshikimate + H2O</text>
        <dbReference type="Rhea" id="RHEA:21096"/>
        <dbReference type="ChEBI" id="CHEBI:15377"/>
        <dbReference type="ChEBI" id="CHEBI:16630"/>
        <dbReference type="ChEBI" id="CHEBI:32364"/>
        <dbReference type="EC" id="4.2.1.10"/>
    </reaction>
</comment>
<comment type="pathway">
    <text evidence="1">Metabolic intermediate biosynthesis; chorismate biosynthesis; chorismate from D-erythrose 4-phosphate and phosphoenolpyruvate: step 3/7.</text>
</comment>
<comment type="subunit">
    <text evidence="1">Homodimer.</text>
</comment>
<comment type="similarity">
    <text evidence="1">Belongs to the type-I 3-dehydroquinase family.</text>
</comment>
<evidence type="ECO:0000255" key="1">
    <source>
        <dbReference type="HAMAP-Rule" id="MF_00214"/>
    </source>
</evidence>
<name>AROD_STRPQ</name>
<dbReference type="EC" id="4.2.1.10" evidence="1"/>
<dbReference type="EMBL" id="BA000034">
    <property type="protein sequence ID" value="BAC64406.1"/>
    <property type="molecule type" value="Genomic_DNA"/>
</dbReference>
<dbReference type="RefSeq" id="WP_002985140.1">
    <property type="nucleotide sequence ID" value="NC_004606.1"/>
</dbReference>
<dbReference type="SMR" id="P0CZ75"/>
<dbReference type="GeneID" id="69901072"/>
<dbReference type="KEGG" id="sps:SPs1311"/>
<dbReference type="HOGENOM" id="CLU_064444_0_0_9"/>
<dbReference type="UniPathway" id="UPA00053">
    <property type="reaction ID" value="UER00086"/>
</dbReference>
<dbReference type="GO" id="GO:0003855">
    <property type="term" value="F:3-dehydroquinate dehydratase activity"/>
    <property type="evidence" value="ECO:0007669"/>
    <property type="project" value="UniProtKB-UniRule"/>
</dbReference>
<dbReference type="GO" id="GO:0046279">
    <property type="term" value="P:3,4-dihydroxybenzoate biosynthetic process"/>
    <property type="evidence" value="ECO:0007669"/>
    <property type="project" value="UniProtKB-ARBA"/>
</dbReference>
<dbReference type="GO" id="GO:0008652">
    <property type="term" value="P:amino acid biosynthetic process"/>
    <property type="evidence" value="ECO:0007669"/>
    <property type="project" value="UniProtKB-KW"/>
</dbReference>
<dbReference type="GO" id="GO:0009073">
    <property type="term" value="P:aromatic amino acid family biosynthetic process"/>
    <property type="evidence" value="ECO:0007669"/>
    <property type="project" value="UniProtKB-KW"/>
</dbReference>
<dbReference type="GO" id="GO:0009423">
    <property type="term" value="P:chorismate biosynthetic process"/>
    <property type="evidence" value="ECO:0007669"/>
    <property type="project" value="UniProtKB-UniRule"/>
</dbReference>
<dbReference type="CDD" id="cd00502">
    <property type="entry name" value="DHQase_I"/>
    <property type="match status" value="1"/>
</dbReference>
<dbReference type="Gene3D" id="3.20.20.70">
    <property type="entry name" value="Aldolase class I"/>
    <property type="match status" value="1"/>
</dbReference>
<dbReference type="HAMAP" id="MF_00214">
    <property type="entry name" value="AroD"/>
    <property type="match status" value="1"/>
</dbReference>
<dbReference type="InterPro" id="IPR013785">
    <property type="entry name" value="Aldolase_TIM"/>
</dbReference>
<dbReference type="InterPro" id="IPR001381">
    <property type="entry name" value="DHquinase_I"/>
</dbReference>
<dbReference type="InterPro" id="IPR050146">
    <property type="entry name" value="Type-I_3-dehydroquinase"/>
</dbReference>
<dbReference type="NCBIfam" id="TIGR01093">
    <property type="entry name" value="aroD"/>
    <property type="match status" value="1"/>
</dbReference>
<dbReference type="PANTHER" id="PTHR43699">
    <property type="entry name" value="3-DEHYDROQUINATE DEHYDRATASE"/>
    <property type="match status" value="1"/>
</dbReference>
<dbReference type="PANTHER" id="PTHR43699:SF1">
    <property type="entry name" value="3-DEHYDROQUINATE DEHYDRATASE"/>
    <property type="match status" value="1"/>
</dbReference>
<dbReference type="Pfam" id="PF01487">
    <property type="entry name" value="DHquinase_I"/>
    <property type="match status" value="1"/>
</dbReference>
<dbReference type="SUPFAM" id="SSF51569">
    <property type="entry name" value="Aldolase"/>
    <property type="match status" value="1"/>
</dbReference>
<keyword id="KW-0028">Amino-acid biosynthesis</keyword>
<keyword id="KW-0057">Aromatic amino acid biosynthesis</keyword>
<keyword id="KW-0456">Lyase</keyword>
<keyword id="KW-0704">Schiff base</keyword>
<reference key="1">
    <citation type="journal article" date="2003" name="Genome Res.">
        <title>Genome sequence of an M3 strain of Streptococcus pyogenes reveals a large-scale genomic rearrangement in invasive strains and new insights into phage evolution.</title>
        <authorList>
            <person name="Nakagawa I."/>
            <person name="Kurokawa K."/>
            <person name="Yamashita A."/>
            <person name="Nakata M."/>
            <person name="Tomiyasu Y."/>
            <person name="Okahashi N."/>
            <person name="Kawabata S."/>
            <person name="Yamazaki K."/>
            <person name="Shiba T."/>
            <person name="Yasunaga T."/>
            <person name="Hayashi H."/>
            <person name="Hattori M."/>
            <person name="Hamada S."/>
        </authorList>
    </citation>
    <scope>NUCLEOTIDE SEQUENCE [LARGE SCALE GENOMIC DNA]</scope>
    <source>
        <strain>SSI-1</strain>
    </source>
</reference>
<organism>
    <name type="scientific">Streptococcus pyogenes serotype M3 (strain SSI-1)</name>
    <dbReference type="NCBI Taxonomy" id="193567"/>
    <lineage>
        <taxon>Bacteria</taxon>
        <taxon>Bacillati</taxon>
        <taxon>Bacillota</taxon>
        <taxon>Bacilli</taxon>
        <taxon>Lactobacillales</taxon>
        <taxon>Streptococcaceae</taxon>
        <taxon>Streptococcus</taxon>
    </lineage>
</organism>
<protein>
    <recommendedName>
        <fullName evidence="1">3-dehydroquinate dehydratase</fullName>
        <shortName evidence="1">3-dehydroquinase</shortName>
        <ecNumber evidence="1">4.2.1.10</ecNumber>
    </recommendedName>
    <alternativeName>
        <fullName evidence="1">Type I DHQase</fullName>
    </alternativeName>
    <alternativeName>
        <fullName evidence="1">Type I dehydroquinase</fullName>
        <shortName evidence="1">DHQ1</shortName>
    </alternativeName>
</protein>
<feature type="chain" id="PRO_0000411275" description="3-dehydroquinate dehydratase">
    <location>
        <begin position="1"/>
        <end position="228"/>
    </location>
</feature>
<feature type="active site" description="Proton donor/acceptor" evidence="1">
    <location>
        <position position="118"/>
    </location>
</feature>
<feature type="active site" description="Schiff-base intermediate with substrate" evidence="1">
    <location>
        <position position="143"/>
    </location>
</feature>
<feature type="binding site" evidence="1">
    <location>
        <begin position="30"/>
        <end position="32"/>
    </location>
    <ligand>
        <name>3-dehydroquinate</name>
        <dbReference type="ChEBI" id="CHEBI:32364"/>
    </ligand>
</feature>
<feature type="binding site" evidence="1">
    <location>
        <position position="62"/>
    </location>
    <ligand>
        <name>3-dehydroquinate</name>
        <dbReference type="ChEBI" id="CHEBI:32364"/>
    </ligand>
</feature>
<feature type="binding site" evidence="1">
    <location>
        <position position="186"/>
    </location>
    <ligand>
        <name>3-dehydroquinate</name>
        <dbReference type="ChEBI" id="CHEBI:32364"/>
    </ligand>
</feature>
<feature type="binding site" evidence="1">
    <location>
        <position position="205"/>
    </location>
    <ligand>
        <name>3-dehydroquinate</name>
        <dbReference type="ChEBI" id="CHEBI:32364"/>
    </ligand>
</feature>
<feature type="binding site" evidence="1">
    <location>
        <position position="209"/>
    </location>
    <ligand>
        <name>3-dehydroquinate</name>
        <dbReference type="ChEBI" id="CHEBI:32364"/>
    </ligand>
</feature>
<gene>
    <name evidence="1" type="primary">aroD</name>
    <name type="ordered locus">SPs1311</name>
</gene>
<proteinExistence type="inferred from homology"/>
<accession>P0CZ75</accession>
<accession>P63591</accession>
<accession>Q9A0E5</accession>
<sequence>MRIVAPVMPRHFDEAQAIDISKYEDVNLIEWRADFLPKDEIVAVAPAIFEKFAGKEIIFTLRTVQEGGNITLSSQEYVDIIKEINAIYNPDYIDFEYFTHKSVFQEMLDFPNLILSYHNFEETPENLMEAFSEMTKLAPRVVKIAVMPQSEQDVLDLMNYTRGFKTLNPEQEFATISMGKLGRLSRFAGDVIGSSWTYVSLDHVSGPGQVTLNDMKRIIEVLEMDISN</sequence>